<sequence length="428" mass="45827">MKRVELEGIPEVRGTVCPPPSKSGSHRALIAASLCDGSTELWNVLDAEDVRATLRLCRMLGAEVDVDGEERLEATVSGFGDSPRAPEDVVDCGNSGTTLRLGCGLAALVEGTTILTGDDSLRSRPVGDLLAALRSLGVDARGRVVRGEEYPPVVISGRPLRERVAVYGDVSSQFVSALLFLGAGLGALRVDVVGDLRSRPYVDMTVETLERFGVSVVREGSSFEVEGRPRSPGKLRVENDWSSAGYFVALGAIGGEMRIEGVDLDSSHPDRRIVEITREMGAEVRRIDGGIVVRSTGRLEGVEVDLSDSPDLVPTVAAMACFAEGVTRIENVGHLRYKEVDRLRALAAELPKFGVEVREGKDWLEIVGGEPVGARVDSRGDHRMAMALAVVGAFARGKTVVERADAVSISYPRFWEDLASVGVPVHSV</sequence>
<feature type="chain" id="PRO_0000088330" description="3-phosphoshikimate 1-carboxyvinyltransferase">
    <location>
        <begin position="1"/>
        <end position="428"/>
    </location>
</feature>
<feature type="active site" description="Proton acceptor" evidence="1">
    <location>
        <position position="311"/>
    </location>
</feature>
<feature type="binding site" evidence="1">
    <location>
        <position position="22"/>
    </location>
    <ligand>
        <name>3-phosphoshikimate</name>
        <dbReference type="ChEBI" id="CHEBI:145989"/>
    </ligand>
</feature>
<feature type="binding site" evidence="1">
    <location>
        <position position="22"/>
    </location>
    <ligand>
        <name>phosphoenolpyruvate</name>
        <dbReference type="ChEBI" id="CHEBI:58702"/>
    </ligand>
</feature>
<feature type="binding site" evidence="1">
    <location>
        <position position="23"/>
    </location>
    <ligand>
        <name>3-phosphoshikimate</name>
        <dbReference type="ChEBI" id="CHEBI:145989"/>
    </ligand>
</feature>
<feature type="binding site" evidence="1">
    <location>
        <position position="27"/>
    </location>
    <ligand>
        <name>3-phosphoshikimate</name>
        <dbReference type="ChEBI" id="CHEBI:145989"/>
    </ligand>
</feature>
<feature type="binding site" evidence="1">
    <location>
        <position position="96"/>
    </location>
    <ligand>
        <name>phosphoenolpyruvate</name>
        <dbReference type="ChEBI" id="CHEBI:58702"/>
    </ligand>
</feature>
<feature type="binding site" evidence="1">
    <location>
        <position position="124"/>
    </location>
    <ligand>
        <name>phosphoenolpyruvate</name>
        <dbReference type="ChEBI" id="CHEBI:58702"/>
    </ligand>
</feature>
<feature type="binding site" evidence="1">
    <location>
        <position position="171"/>
    </location>
    <ligand>
        <name>3-phosphoshikimate</name>
        <dbReference type="ChEBI" id="CHEBI:145989"/>
    </ligand>
</feature>
<feature type="binding site" evidence="1">
    <location>
        <position position="172"/>
    </location>
    <ligand>
        <name>3-phosphoshikimate</name>
        <dbReference type="ChEBI" id="CHEBI:145989"/>
    </ligand>
</feature>
<feature type="binding site" evidence="1">
    <location>
        <position position="173"/>
    </location>
    <ligand>
        <name>3-phosphoshikimate</name>
        <dbReference type="ChEBI" id="CHEBI:145989"/>
    </ligand>
</feature>
<feature type="binding site" evidence="1">
    <location>
        <position position="173"/>
    </location>
    <ligand>
        <name>phosphoenolpyruvate</name>
        <dbReference type="ChEBI" id="CHEBI:58702"/>
    </ligand>
</feature>
<feature type="binding site" evidence="1">
    <location>
        <position position="198"/>
    </location>
    <ligand>
        <name>3-phosphoshikimate</name>
        <dbReference type="ChEBI" id="CHEBI:145989"/>
    </ligand>
</feature>
<feature type="binding site" evidence="1">
    <location>
        <position position="311"/>
    </location>
    <ligand>
        <name>3-phosphoshikimate</name>
        <dbReference type="ChEBI" id="CHEBI:145989"/>
    </ligand>
</feature>
<feature type="binding site" evidence="1">
    <location>
        <position position="338"/>
    </location>
    <ligand>
        <name>3-phosphoshikimate</name>
        <dbReference type="ChEBI" id="CHEBI:145989"/>
    </ligand>
</feature>
<feature type="binding site" evidence="1">
    <location>
        <position position="342"/>
    </location>
    <ligand>
        <name>phosphoenolpyruvate</name>
        <dbReference type="ChEBI" id="CHEBI:58702"/>
    </ligand>
</feature>
<feature type="binding site" evidence="1">
    <location>
        <position position="383"/>
    </location>
    <ligand>
        <name>phosphoenolpyruvate</name>
        <dbReference type="ChEBI" id="CHEBI:58702"/>
    </ligand>
</feature>
<gene>
    <name evidence="1" type="primary">aroA</name>
    <name type="ordered locus">MK0628</name>
</gene>
<organism>
    <name type="scientific">Methanopyrus kandleri (strain AV19 / DSM 6324 / JCM 9639 / NBRC 100938)</name>
    <dbReference type="NCBI Taxonomy" id="190192"/>
    <lineage>
        <taxon>Archaea</taxon>
        <taxon>Methanobacteriati</taxon>
        <taxon>Methanobacteriota</taxon>
        <taxon>Methanomada group</taxon>
        <taxon>Methanopyri</taxon>
        <taxon>Methanopyrales</taxon>
        <taxon>Methanopyraceae</taxon>
        <taxon>Methanopyrus</taxon>
    </lineage>
</organism>
<keyword id="KW-0028">Amino-acid biosynthesis</keyword>
<keyword id="KW-0057">Aromatic amino acid biosynthesis</keyword>
<keyword id="KW-0963">Cytoplasm</keyword>
<keyword id="KW-1185">Reference proteome</keyword>
<keyword id="KW-0808">Transferase</keyword>
<evidence type="ECO:0000255" key="1">
    <source>
        <dbReference type="HAMAP-Rule" id="MF_00210"/>
    </source>
</evidence>
<accession>Q8TXN4</accession>
<protein>
    <recommendedName>
        <fullName evidence="1">3-phosphoshikimate 1-carboxyvinyltransferase</fullName>
        <ecNumber evidence="1">2.5.1.19</ecNumber>
    </recommendedName>
    <alternativeName>
        <fullName evidence="1">5-enolpyruvylshikimate-3-phosphate synthase</fullName>
        <shortName evidence="1">EPSP synthase</shortName>
        <shortName evidence="1">EPSPS</shortName>
    </alternativeName>
</protein>
<reference key="1">
    <citation type="journal article" date="2002" name="Proc. Natl. Acad. Sci. U.S.A.">
        <title>The complete genome of hyperthermophile Methanopyrus kandleri AV19 and monophyly of archaeal methanogens.</title>
        <authorList>
            <person name="Slesarev A.I."/>
            <person name="Mezhevaya K.V."/>
            <person name="Makarova K.S."/>
            <person name="Polushin N.N."/>
            <person name="Shcherbinina O.V."/>
            <person name="Shakhova V.V."/>
            <person name="Belova G.I."/>
            <person name="Aravind L."/>
            <person name="Natale D.A."/>
            <person name="Rogozin I.B."/>
            <person name="Tatusov R.L."/>
            <person name="Wolf Y.I."/>
            <person name="Stetter K.O."/>
            <person name="Malykh A.G."/>
            <person name="Koonin E.V."/>
            <person name="Kozyavkin S.A."/>
        </authorList>
    </citation>
    <scope>NUCLEOTIDE SEQUENCE [LARGE SCALE GENOMIC DNA]</scope>
    <source>
        <strain>AV19 / DSM 6324 / JCM 9639 / NBRC 100938</strain>
    </source>
</reference>
<proteinExistence type="inferred from homology"/>
<dbReference type="EC" id="2.5.1.19" evidence="1"/>
<dbReference type="EMBL" id="AE009439">
    <property type="protein sequence ID" value="AAM01843.1"/>
    <property type="molecule type" value="Genomic_DNA"/>
</dbReference>
<dbReference type="RefSeq" id="WP_011018998.1">
    <property type="nucleotide sequence ID" value="NC_003551.1"/>
</dbReference>
<dbReference type="SMR" id="Q8TXN4"/>
<dbReference type="FunCoup" id="Q8TXN4">
    <property type="interactions" value="124"/>
</dbReference>
<dbReference type="STRING" id="190192.MK0628"/>
<dbReference type="PaxDb" id="190192-MK0628"/>
<dbReference type="EnsemblBacteria" id="AAM01843">
    <property type="protein sequence ID" value="AAM01843"/>
    <property type="gene ID" value="MK0628"/>
</dbReference>
<dbReference type="GeneID" id="1476729"/>
<dbReference type="KEGG" id="mka:MK0628"/>
<dbReference type="PATRIC" id="fig|190192.8.peg.667"/>
<dbReference type="HOGENOM" id="CLU_024321_0_0_2"/>
<dbReference type="InParanoid" id="Q8TXN4"/>
<dbReference type="OrthoDB" id="43788at2157"/>
<dbReference type="UniPathway" id="UPA00053"/>
<dbReference type="Proteomes" id="UP000001826">
    <property type="component" value="Chromosome"/>
</dbReference>
<dbReference type="GO" id="GO:0005737">
    <property type="term" value="C:cytoplasm"/>
    <property type="evidence" value="ECO:0007669"/>
    <property type="project" value="UniProtKB-SubCell"/>
</dbReference>
<dbReference type="GO" id="GO:0003866">
    <property type="term" value="F:3-phosphoshikimate 1-carboxyvinyltransferase activity"/>
    <property type="evidence" value="ECO:0007669"/>
    <property type="project" value="UniProtKB-UniRule"/>
</dbReference>
<dbReference type="GO" id="GO:0008652">
    <property type="term" value="P:amino acid biosynthetic process"/>
    <property type="evidence" value="ECO:0007669"/>
    <property type="project" value="UniProtKB-KW"/>
</dbReference>
<dbReference type="GO" id="GO:0009073">
    <property type="term" value="P:aromatic amino acid family biosynthetic process"/>
    <property type="evidence" value="ECO:0007669"/>
    <property type="project" value="UniProtKB-KW"/>
</dbReference>
<dbReference type="GO" id="GO:0009423">
    <property type="term" value="P:chorismate biosynthetic process"/>
    <property type="evidence" value="ECO:0007669"/>
    <property type="project" value="UniProtKB-UniRule"/>
</dbReference>
<dbReference type="CDD" id="cd01556">
    <property type="entry name" value="EPSP_synthase"/>
    <property type="match status" value="1"/>
</dbReference>
<dbReference type="Gene3D" id="3.65.10.10">
    <property type="entry name" value="Enolpyruvate transferase domain"/>
    <property type="match status" value="2"/>
</dbReference>
<dbReference type="HAMAP" id="MF_00210">
    <property type="entry name" value="EPSP_synth"/>
    <property type="match status" value="1"/>
</dbReference>
<dbReference type="InterPro" id="IPR001986">
    <property type="entry name" value="Enolpyruvate_Tfrase_dom"/>
</dbReference>
<dbReference type="InterPro" id="IPR036968">
    <property type="entry name" value="Enolpyruvate_Tfrase_sf"/>
</dbReference>
<dbReference type="InterPro" id="IPR006264">
    <property type="entry name" value="EPSP_synthase"/>
</dbReference>
<dbReference type="InterPro" id="IPR023193">
    <property type="entry name" value="EPSP_synthase_CS"/>
</dbReference>
<dbReference type="InterPro" id="IPR013792">
    <property type="entry name" value="RNA3'P_cycl/enolpyr_Trfase_a/b"/>
</dbReference>
<dbReference type="NCBIfam" id="TIGR01356">
    <property type="entry name" value="aroA"/>
    <property type="match status" value="1"/>
</dbReference>
<dbReference type="PANTHER" id="PTHR21090">
    <property type="entry name" value="AROM/DEHYDROQUINATE SYNTHASE"/>
    <property type="match status" value="1"/>
</dbReference>
<dbReference type="PANTHER" id="PTHR21090:SF5">
    <property type="entry name" value="PENTAFUNCTIONAL AROM POLYPEPTIDE"/>
    <property type="match status" value="1"/>
</dbReference>
<dbReference type="Pfam" id="PF00275">
    <property type="entry name" value="EPSP_synthase"/>
    <property type="match status" value="1"/>
</dbReference>
<dbReference type="PIRSF" id="PIRSF000505">
    <property type="entry name" value="EPSPS"/>
    <property type="match status" value="1"/>
</dbReference>
<dbReference type="SUPFAM" id="SSF55205">
    <property type="entry name" value="EPT/RTPC-like"/>
    <property type="match status" value="1"/>
</dbReference>
<dbReference type="PROSITE" id="PS00885">
    <property type="entry name" value="EPSP_SYNTHASE_2"/>
    <property type="match status" value="1"/>
</dbReference>
<name>AROA_METKA</name>
<comment type="function">
    <text evidence="1">Catalyzes the transfer of the enolpyruvyl moiety of phosphoenolpyruvate (PEP) to the 5-hydroxyl of shikimate-3-phosphate (S3P) to produce enolpyruvyl shikimate-3-phosphate and inorganic phosphate.</text>
</comment>
<comment type="catalytic activity">
    <reaction evidence="1">
        <text>3-phosphoshikimate + phosphoenolpyruvate = 5-O-(1-carboxyvinyl)-3-phosphoshikimate + phosphate</text>
        <dbReference type="Rhea" id="RHEA:21256"/>
        <dbReference type="ChEBI" id="CHEBI:43474"/>
        <dbReference type="ChEBI" id="CHEBI:57701"/>
        <dbReference type="ChEBI" id="CHEBI:58702"/>
        <dbReference type="ChEBI" id="CHEBI:145989"/>
        <dbReference type="EC" id="2.5.1.19"/>
    </reaction>
    <physiologicalReaction direction="left-to-right" evidence="1">
        <dbReference type="Rhea" id="RHEA:21257"/>
    </physiologicalReaction>
</comment>
<comment type="pathway">
    <text evidence="1">Metabolic intermediate biosynthesis; chorismate biosynthesis.</text>
</comment>
<comment type="subunit">
    <text evidence="1">Monomer.</text>
</comment>
<comment type="subcellular location">
    <subcellularLocation>
        <location evidence="1">Cytoplasm</location>
    </subcellularLocation>
</comment>
<comment type="similarity">
    <text evidence="1">Belongs to the EPSP synthase family.</text>
</comment>